<name>VHCD_METVO</name>
<gene>
    <name type="primary">vhcD</name>
</gene>
<organism>
    <name type="scientific">Methanococcus voltae</name>
    <dbReference type="NCBI Taxonomy" id="2188"/>
    <lineage>
        <taxon>Archaea</taxon>
        <taxon>Methanobacteriati</taxon>
        <taxon>Methanobacteriota</taxon>
        <taxon>Methanomada group</taxon>
        <taxon>Methanococci</taxon>
        <taxon>Methanococcales</taxon>
        <taxon>Methanococcaceae</taxon>
        <taxon>Methanococcus</taxon>
    </lineage>
</organism>
<sequence length="144" mass="16314">MAENWEPKIVGFCCNWCTYGGADTAGVGRMQYPPSIRIIRVMCSGRIEPSFILKAFKEGADGVFIGGCHPGDCHYDAGNYKWQRRVMMLYDMLDELGIEKERVMHEWISASEGEKFQIAMNDIYDKIKAMGPCTLKENTGKIDE</sequence>
<protein>
    <recommendedName>
        <fullName>F420-non-reducing hydrogenase vhc iron-sulfur subunit D</fullName>
        <ecNumber>1.12.99.-</ecNumber>
    </recommendedName>
</protein>
<reference key="1">
    <citation type="journal article" date="1992" name="Mol. Gen. Genet.">
        <title>Methanococcus voltae harbors four gene clusters potentially encoding two [NiFe] and two [NiFeSe] hydrogenases, each of the cofactor F420-reducing or F420-non-reducing types.</title>
        <authorList>
            <person name="Halboth S."/>
            <person name="Klein A."/>
        </authorList>
    </citation>
    <scope>NUCLEOTIDE SEQUENCE [GENOMIC DNA]</scope>
    <source>
        <strain>ATCC 33273 / DSM 1537 / NBRC 100457 / OCM 70 / PS</strain>
    </source>
</reference>
<reference key="2">
    <citation type="journal article" date="1994" name="Mol. Gen. Genet.">
        <title>Selenium is involved in the negative regulation of the expression of selenium-free [NiFe] hydrogenases in Methanococcus voltae.</title>
        <authorList>
            <person name="Berghoefer Y."/>
            <person name="Agha-Amiri K."/>
            <person name="Klein A."/>
        </authorList>
    </citation>
    <scope>TRANSCRIPTIONAL REGULATION</scope>
    <source>
        <strain>ATCC 33273 / DSM 1537 / NBRC 100457 / OCM 70 / PS</strain>
    </source>
</reference>
<feature type="chain" id="PRO_0000218277" description="F420-non-reducing hydrogenase vhc iron-sulfur subunit D">
    <location>
        <begin position="1"/>
        <end position="144"/>
    </location>
</feature>
<comment type="cofactor">
    <cofactor evidence="1">
        <name>[2Fe-2S] cluster</name>
        <dbReference type="ChEBI" id="CHEBI:190135"/>
    </cofactor>
    <text evidence="1">Binds 1 [2Fe-2S] cluster.</text>
</comment>
<comment type="subunit">
    <text evidence="1">The F420-non-reducing hydrogenase vhc is composed of three subunits; VhcA, VhcD and VhcG.</text>
</comment>
<comment type="induction">
    <text evidence="2">By selenium deprivation.</text>
</comment>
<comment type="similarity">
    <text evidence="3">Belongs to the MvhD/VhuD family.</text>
</comment>
<evidence type="ECO:0000250" key="1"/>
<evidence type="ECO:0000269" key="2">
    <source>
    </source>
</evidence>
<evidence type="ECO:0000305" key="3"/>
<accession>Q00405</accession>
<keyword id="KW-0001">2Fe-2S</keyword>
<keyword id="KW-0249">Electron transport</keyword>
<keyword id="KW-0408">Iron</keyword>
<keyword id="KW-0411">Iron-sulfur</keyword>
<keyword id="KW-0479">Metal-binding</keyword>
<keyword id="KW-0560">Oxidoreductase</keyword>
<keyword id="KW-0813">Transport</keyword>
<dbReference type="EC" id="1.12.99.-"/>
<dbReference type="EMBL" id="X61203">
    <property type="protein sequence ID" value="CAA43504.1"/>
    <property type="molecule type" value="Genomic_DNA"/>
</dbReference>
<dbReference type="PIR" id="B59304">
    <property type="entry name" value="B59304"/>
</dbReference>
<dbReference type="SMR" id="Q00405"/>
<dbReference type="GO" id="GO:0051537">
    <property type="term" value="F:2 iron, 2 sulfur cluster binding"/>
    <property type="evidence" value="ECO:0007669"/>
    <property type="project" value="UniProtKB-KW"/>
</dbReference>
<dbReference type="GO" id="GO:0046872">
    <property type="term" value="F:metal ion binding"/>
    <property type="evidence" value="ECO:0007669"/>
    <property type="project" value="UniProtKB-KW"/>
</dbReference>
<dbReference type="GO" id="GO:0016491">
    <property type="term" value="F:oxidoreductase activity"/>
    <property type="evidence" value="ECO:0007669"/>
    <property type="project" value="UniProtKB-KW"/>
</dbReference>
<dbReference type="InterPro" id="IPR003813">
    <property type="entry name" value="MvhD/FlpD"/>
</dbReference>
<dbReference type="Pfam" id="PF02662">
    <property type="entry name" value="FlpD"/>
    <property type="match status" value="1"/>
</dbReference>
<proteinExistence type="evidence at transcript level"/>